<keyword id="KW-0378">Hydrolase</keyword>
<name>AGUA_STRZJ</name>
<gene>
    <name evidence="1" type="primary">aguA</name>
    <name type="ordered locus">SPJ_0862</name>
</gene>
<organism>
    <name type="scientific">Streptococcus pneumoniae (strain JJA)</name>
    <dbReference type="NCBI Taxonomy" id="488222"/>
    <lineage>
        <taxon>Bacteria</taxon>
        <taxon>Bacillati</taxon>
        <taxon>Bacillota</taxon>
        <taxon>Bacilli</taxon>
        <taxon>Lactobacillales</taxon>
        <taxon>Streptococcaceae</taxon>
        <taxon>Streptococcus</taxon>
    </lineage>
</organism>
<protein>
    <recommendedName>
        <fullName evidence="1">Putative agmatine deiminase</fullName>
        <ecNumber evidence="1">3.5.3.12</ecNumber>
    </recommendedName>
    <alternativeName>
        <fullName evidence="1">Agmatine iminohydrolase</fullName>
    </alternativeName>
</protein>
<sequence>MMDSPKKLGYHMPAEYEPHHGTLMIWPTRPGSWPFQGKAAKRAFTQIIETIAEGERVYLLVEQAYLSEAQSYLGDKVVYLDIPTNDAWARDTGPTILVNDKGKKLAVDWAFNAWGGTYDGLYQDYEEDDQVASRFAEALERPVYDAKPFVLEGGAIHSDGQGTILVTESCLLSPGRNPNLTKEEIENTLLESLGAEKVIWLPYGIYQDETNEHVDNVAAFVGPAELVLAWTDDENDPQYAMSKADLELLEQETDAKGCHFTIHKLPIPAVRQVVTEEDLPGYIYEEGEEKRYAGERLAASYVNFYIANKAVLVPQFEDVNDQVALDILSKCFPDRKVVGIPARDILLGGGNIHCITQQIPE</sequence>
<comment type="catalytic activity">
    <reaction evidence="1">
        <text>agmatine + H2O = N-carbamoylputrescine + NH4(+)</text>
        <dbReference type="Rhea" id="RHEA:18037"/>
        <dbReference type="ChEBI" id="CHEBI:15377"/>
        <dbReference type="ChEBI" id="CHEBI:28938"/>
        <dbReference type="ChEBI" id="CHEBI:58145"/>
        <dbReference type="ChEBI" id="CHEBI:58318"/>
        <dbReference type="EC" id="3.5.3.12"/>
    </reaction>
</comment>
<comment type="similarity">
    <text evidence="1">Belongs to the agmatine deiminase family.</text>
</comment>
<accession>C1CDR9</accession>
<dbReference type="EC" id="3.5.3.12" evidence="1"/>
<dbReference type="EMBL" id="CP000919">
    <property type="protein sequence ID" value="ACO19723.1"/>
    <property type="molecule type" value="Genomic_DNA"/>
</dbReference>
<dbReference type="RefSeq" id="WP_000969445.1">
    <property type="nucleotide sequence ID" value="NC_012466.1"/>
</dbReference>
<dbReference type="SMR" id="C1CDR9"/>
<dbReference type="KEGG" id="sjj:SPJ_0862"/>
<dbReference type="HOGENOM" id="CLU_037682_1_0_9"/>
<dbReference type="Proteomes" id="UP000002206">
    <property type="component" value="Chromosome"/>
</dbReference>
<dbReference type="GO" id="GO:0047632">
    <property type="term" value="F:agmatine deiminase activity"/>
    <property type="evidence" value="ECO:0007669"/>
    <property type="project" value="UniProtKB-UniRule"/>
</dbReference>
<dbReference type="GO" id="GO:0004668">
    <property type="term" value="F:protein-arginine deiminase activity"/>
    <property type="evidence" value="ECO:0007669"/>
    <property type="project" value="InterPro"/>
</dbReference>
<dbReference type="GO" id="GO:0009446">
    <property type="term" value="P:putrescine biosynthetic process"/>
    <property type="evidence" value="ECO:0007669"/>
    <property type="project" value="InterPro"/>
</dbReference>
<dbReference type="Gene3D" id="3.75.10.10">
    <property type="entry name" value="L-arginine/glycine Amidinotransferase, Chain A"/>
    <property type="match status" value="1"/>
</dbReference>
<dbReference type="HAMAP" id="MF_01841">
    <property type="entry name" value="Agmatine_deimin"/>
    <property type="match status" value="1"/>
</dbReference>
<dbReference type="InterPro" id="IPR017754">
    <property type="entry name" value="Agmatine_deiminase"/>
</dbReference>
<dbReference type="InterPro" id="IPR007466">
    <property type="entry name" value="Peptidyl-Arg-deiminase_porph"/>
</dbReference>
<dbReference type="NCBIfam" id="TIGR03380">
    <property type="entry name" value="agmatine_aguA"/>
    <property type="match status" value="1"/>
</dbReference>
<dbReference type="NCBIfam" id="NF010070">
    <property type="entry name" value="PRK13551.1"/>
    <property type="match status" value="1"/>
</dbReference>
<dbReference type="PANTHER" id="PTHR31377">
    <property type="entry name" value="AGMATINE DEIMINASE-RELATED"/>
    <property type="match status" value="1"/>
</dbReference>
<dbReference type="PANTHER" id="PTHR31377:SF0">
    <property type="entry name" value="AGMATINE DEIMINASE-RELATED"/>
    <property type="match status" value="1"/>
</dbReference>
<dbReference type="Pfam" id="PF04371">
    <property type="entry name" value="PAD_porph"/>
    <property type="match status" value="1"/>
</dbReference>
<dbReference type="SUPFAM" id="SSF55909">
    <property type="entry name" value="Pentein"/>
    <property type="match status" value="1"/>
</dbReference>
<evidence type="ECO:0000255" key="1">
    <source>
        <dbReference type="HAMAP-Rule" id="MF_01841"/>
    </source>
</evidence>
<reference key="1">
    <citation type="journal article" date="2010" name="Genome Biol.">
        <title>Structure and dynamics of the pan-genome of Streptococcus pneumoniae and closely related species.</title>
        <authorList>
            <person name="Donati C."/>
            <person name="Hiller N.L."/>
            <person name="Tettelin H."/>
            <person name="Muzzi A."/>
            <person name="Croucher N.J."/>
            <person name="Angiuoli S.V."/>
            <person name="Oggioni M."/>
            <person name="Dunning Hotopp J.C."/>
            <person name="Hu F.Z."/>
            <person name="Riley D.R."/>
            <person name="Covacci A."/>
            <person name="Mitchell T.J."/>
            <person name="Bentley S.D."/>
            <person name="Kilian M."/>
            <person name="Ehrlich G.D."/>
            <person name="Rappuoli R."/>
            <person name="Moxon E.R."/>
            <person name="Masignani V."/>
        </authorList>
    </citation>
    <scope>NUCLEOTIDE SEQUENCE [LARGE SCALE GENOMIC DNA]</scope>
    <source>
        <strain>JJA</strain>
    </source>
</reference>
<proteinExistence type="inferred from homology"/>
<feature type="chain" id="PRO_1000188419" description="Putative agmatine deiminase">
    <location>
        <begin position="1"/>
        <end position="361"/>
    </location>
</feature>
<feature type="active site" description="Amidino-cysteine intermediate" evidence="1">
    <location>
        <position position="354"/>
    </location>
</feature>